<organism>
    <name type="scientific">Salmonella typhi</name>
    <dbReference type="NCBI Taxonomy" id="90370"/>
    <lineage>
        <taxon>Bacteria</taxon>
        <taxon>Pseudomonadati</taxon>
        <taxon>Pseudomonadota</taxon>
        <taxon>Gammaproteobacteria</taxon>
        <taxon>Enterobacterales</taxon>
        <taxon>Enterobacteriaceae</taxon>
        <taxon>Salmonella</taxon>
    </lineage>
</organism>
<reference key="1">
    <citation type="journal article" date="2001" name="Nature">
        <title>Complete genome sequence of a multiple drug resistant Salmonella enterica serovar Typhi CT18.</title>
        <authorList>
            <person name="Parkhill J."/>
            <person name="Dougan G."/>
            <person name="James K.D."/>
            <person name="Thomson N.R."/>
            <person name="Pickard D."/>
            <person name="Wain J."/>
            <person name="Churcher C.M."/>
            <person name="Mungall K.L."/>
            <person name="Bentley S.D."/>
            <person name="Holden M.T.G."/>
            <person name="Sebaihia M."/>
            <person name="Baker S."/>
            <person name="Basham D."/>
            <person name="Brooks K."/>
            <person name="Chillingworth T."/>
            <person name="Connerton P."/>
            <person name="Cronin A."/>
            <person name="Davis P."/>
            <person name="Davies R.M."/>
            <person name="Dowd L."/>
            <person name="White N."/>
            <person name="Farrar J."/>
            <person name="Feltwell T."/>
            <person name="Hamlin N."/>
            <person name="Haque A."/>
            <person name="Hien T.T."/>
            <person name="Holroyd S."/>
            <person name="Jagels K."/>
            <person name="Krogh A."/>
            <person name="Larsen T.S."/>
            <person name="Leather S."/>
            <person name="Moule S."/>
            <person name="O'Gaora P."/>
            <person name="Parry C."/>
            <person name="Quail M.A."/>
            <person name="Rutherford K.M."/>
            <person name="Simmonds M."/>
            <person name="Skelton J."/>
            <person name="Stevens K."/>
            <person name="Whitehead S."/>
            <person name="Barrell B.G."/>
        </authorList>
    </citation>
    <scope>NUCLEOTIDE SEQUENCE [LARGE SCALE GENOMIC DNA]</scope>
    <source>
        <strain>CT18</strain>
    </source>
</reference>
<reference key="2">
    <citation type="journal article" date="2003" name="J. Bacteriol.">
        <title>Comparative genomics of Salmonella enterica serovar Typhi strains Ty2 and CT18.</title>
        <authorList>
            <person name="Deng W."/>
            <person name="Liou S.-R."/>
            <person name="Plunkett G. III"/>
            <person name="Mayhew G.F."/>
            <person name="Rose D.J."/>
            <person name="Burland V."/>
            <person name="Kodoyianni V."/>
            <person name="Schwartz D.C."/>
            <person name="Blattner F.R."/>
        </authorList>
    </citation>
    <scope>NUCLEOTIDE SEQUENCE [LARGE SCALE GENOMIC DNA]</scope>
    <source>
        <strain>ATCC 700931 / Ty2</strain>
    </source>
</reference>
<gene>
    <name type="primary">rdgB</name>
    <name type="synonym">yggV</name>
    <name type="ordered locus">STY3256</name>
    <name type="ordered locus">t3015</name>
</gene>
<protein>
    <recommendedName>
        <fullName evidence="1">dITP/XTP pyrophosphatase</fullName>
        <ecNumber evidence="1">3.6.1.66</ecNumber>
    </recommendedName>
    <alternativeName>
        <fullName evidence="1">Non-canonical purine NTP pyrophosphatase</fullName>
    </alternativeName>
    <alternativeName>
        <fullName evidence="1">Non-standard purine NTP pyrophosphatase</fullName>
    </alternativeName>
    <alternativeName>
        <fullName evidence="1">Nucleoside-triphosphate diphosphatase</fullName>
    </alternativeName>
    <alternativeName>
        <fullName evidence="1">Nucleoside-triphosphate pyrophosphatase</fullName>
        <shortName evidence="1">NTPase</shortName>
    </alternativeName>
</protein>
<dbReference type="EC" id="3.6.1.66" evidence="1"/>
<dbReference type="EMBL" id="AL513382">
    <property type="protein sequence ID" value="CAD02927.1"/>
    <property type="molecule type" value="Genomic_DNA"/>
</dbReference>
<dbReference type="EMBL" id="AE014613">
    <property type="protein sequence ID" value="AAO70567.1"/>
    <property type="molecule type" value="Genomic_DNA"/>
</dbReference>
<dbReference type="RefSeq" id="NP_457495.1">
    <property type="nucleotide sequence ID" value="NC_003198.1"/>
</dbReference>
<dbReference type="RefSeq" id="WP_001174773.1">
    <property type="nucleotide sequence ID" value="NZ_WSUR01000049.1"/>
</dbReference>
<dbReference type="SMR" id="Q8Z3U6"/>
<dbReference type="STRING" id="220341.gene:17587129"/>
<dbReference type="KEGG" id="stt:t3015"/>
<dbReference type="KEGG" id="sty:STY3256"/>
<dbReference type="PATRIC" id="fig|220341.7.peg.3320"/>
<dbReference type="eggNOG" id="COG0127">
    <property type="taxonomic scope" value="Bacteria"/>
</dbReference>
<dbReference type="HOGENOM" id="CLU_082080_0_3_6"/>
<dbReference type="OMA" id="YDPIFQP"/>
<dbReference type="OrthoDB" id="9807456at2"/>
<dbReference type="Proteomes" id="UP000000541">
    <property type="component" value="Chromosome"/>
</dbReference>
<dbReference type="Proteomes" id="UP000002670">
    <property type="component" value="Chromosome"/>
</dbReference>
<dbReference type="GO" id="GO:0005829">
    <property type="term" value="C:cytosol"/>
    <property type="evidence" value="ECO:0007669"/>
    <property type="project" value="TreeGrafter"/>
</dbReference>
<dbReference type="GO" id="GO:0035870">
    <property type="term" value="F:dITP diphosphatase activity"/>
    <property type="evidence" value="ECO:0007669"/>
    <property type="project" value="RHEA"/>
</dbReference>
<dbReference type="GO" id="GO:0036220">
    <property type="term" value="F:ITP diphosphatase activity"/>
    <property type="evidence" value="ECO:0007669"/>
    <property type="project" value="UniProtKB-EC"/>
</dbReference>
<dbReference type="GO" id="GO:0046872">
    <property type="term" value="F:metal ion binding"/>
    <property type="evidence" value="ECO:0007669"/>
    <property type="project" value="UniProtKB-KW"/>
</dbReference>
<dbReference type="GO" id="GO:0000166">
    <property type="term" value="F:nucleotide binding"/>
    <property type="evidence" value="ECO:0007669"/>
    <property type="project" value="UniProtKB-KW"/>
</dbReference>
<dbReference type="GO" id="GO:0017111">
    <property type="term" value="F:ribonucleoside triphosphate phosphatase activity"/>
    <property type="evidence" value="ECO:0007669"/>
    <property type="project" value="InterPro"/>
</dbReference>
<dbReference type="GO" id="GO:0036222">
    <property type="term" value="F:XTP diphosphatase activity"/>
    <property type="evidence" value="ECO:0007669"/>
    <property type="project" value="RHEA"/>
</dbReference>
<dbReference type="GO" id="GO:0009117">
    <property type="term" value="P:nucleotide metabolic process"/>
    <property type="evidence" value="ECO:0007669"/>
    <property type="project" value="UniProtKB-KW"/>
</dbReference>
<dbReference type="GO" id="GO:0009146">
    <property type="term" value="P:purine nucleoside triphosphate catabolic process"/>
    <property type="evidence" value="ECO:0007669"/>
    <property type="project" value="UniProtKB-UniRule"/>
</dbReference>
<dbReference type="CDD" id="cd00515">
    <property type="entry name" value="HAM1"/>
    <property type="match status" value="1"/>
</dbReference>
<dbReference type="FunFam" id="3.90.950.10:FF:000001">
    <property type="entry name" value="dITP/XTP pyrophosphatase"/>
    <property type="match status" value="1"/>
</dbReference>
<dbReference type="Gene3D" id="3.90.950.10">
    <property type="match status" value="1"/>
</dbReference>
<dbReference type="HAMAP" id="MF_01405">
    <property type="entry name" value="Non_canon_purine_NTPase"/>
    <property type="match status" value="1"/>
</dbReference>
<dbReference type="InterPro" id="IPR020922">
    <property type="entry name" value="dITP/XTP_pyrophosphatase"/>
</dbReference>
<dbReference type="InterPro" id="IPR029001">
    <property type="entry name" value="ITPase-like_fam"/>
</dbReference>
<dbReference type="InterPro" id="IPR002637">
    <property type="entry name" value="RdgB/HAM1"/>
</dbReference>
<dbReference type="NCBIfam" id="NF011397">
    <property type="entry name" value="PRK14822.1"/>
    <property type="match status" value="1"/>
</dbReference>
<dbReference type="NCBIfam" id="TIGR00042">
    <property type="entry name" value="RdgB/HAM1 family non-canonical purine NTP pyrophosphatase"/>
    <property type="match status" value="1"/>
</dbReference>
<dbReference type="PANTHER" id="PTHR11067:SF9">
    <property type="entry name" value="INOSINE TRIPHOSPHATE PYROPHOSPHATASE"/>
    <property type="match status" value="1"/>
</dbReference>
<dbReference type="PANTHER" id="PTHR11067">
    <property type="entry name" value="INOSINE TRIPHOSPHATE PYROPHOSPHATASE/HAM1 PROTEIN"/>
    <property type="match status" value="1"/>
</dbReference>
<dbReference type="Pfam" id="PF01725">
    <property type="entry name" value="Ham1p_like"/>
    <property type="match status" value="1"/>
</dbReference>
<dbReference type="SUPFAM" id="SSF52972">
    <property type="entry name" value="ITPase-like"/>
    <property type="match status" value="1"/>
</dbReference>
<sequence length="197" mass="21032">MQKVVLATGNAGKVRELASLLSDFGLDVVAQTKLGVDSAEETGLTFIENAILKARHAAKMTGLPAIADDSGLAVDVLGGAPGIYSARYSGENATDQQNLEKLLHTLRDVPDDKRQARFHCVLVYLRHAEDPTPIVCHGSWPGVITRQAAGNGGFGYDPIFFVPSEGKTAAELTREEKSAISHRGQALKLLLDALRNG</sequence>
<name>IXTPA_SALTI</name>
<evidence type="ECO:0000255" key="1">
    <source>
        <dbReference type="HAMAP-Rule" id="MF_01405"/>
    </source>
</evidence>
<feature type="chain" id="PRO_0000178222" description="dITP/XTP pyrophosphatase">
    <location>
        <begin position="1"/>
        <end position="197"/>
    </location>
</feature>
<feature type="active site" description="Proton acceptor" evidence="1">
    <location>
        <position position="69"/>
    </location>
</feature>
<feature type="binding site" evidence="1">
    <location>
        <begin position="8"/>
        <end position="13"/>
    </location>
    <ligand>
        <name>substrate</name>
    </ligand>
</feature>
<feature type="binding site" evidence="1">
    <location>
        <position position="40"/>
    </location>
    <ligand>
        <name>Mg(2+)</name>
        <dbReference type="ChEBI" id="CHEBI:18420"/>
    </ligand>
</feature>
<feature type="binding site" evidence="1">
    <location>
        <position position="69"/>
    </location>
    <ligand>
        <name>Mg(2+)</name>
        <dbReference type="ChEBI" id="CHEBI:18420"/>
    </ligand>
</feature>
<feature type="binding site" evidence="1">
    <location>
        <position position="70"/>
    </location>
    <ligand>
        <name>substrate</name>
    </ligand>
</feature>
<feature type="binding site" evidence="1">
    <location>
        <begin position="154"/>
        <end position="157"/>
    </location>
    <ligand>
        <name>substrate</name>
    </ligand>
</feature>
<feature type="binding site" evidence="1">
    <location>
        <position position="177"/>
    </location>
    <ligand>
        <name>substrate</name>
    </ligand>
</feature>
<feature type="binding site" evidence="1">
    <location>
        <begin position="182"/>
        <end position="183"/>
    </location>
    <ligand>
        <name>substrate</name>
    </ligand>
</feature>
<comment type="function">
    <text evidence="1">Pyrophosphatase that catalyzes the hydrolysis of nucleoside triphosphates to their monophosphate derivatives, with a high preference for the non-canonical purine nucleotides XTP (xanthosine triphosphate), dITP (deoxyinosine triphosphate) and ITP. Seems to function as a house-cleaning enzyme that removes non-canonical purine nucleotides from the nucleotide pool, thus preventing their incorporation into DNA/RNA and avoiding chromosomal lesions.</text>
</comment>
<comment type="catalytic activity">
    <reaction evidence="1">
        <text>XTP + H2O = XMP + diphosphate + H(+)</text>
        <dbReference type="Rhea" id="RHEA:28610"/>
        <dbReference type="ChEBI" id="CHEBI:15377"/>
        <dbReference type="ChEBI" id="CHEBI:15378"/>
        <dbReference type="ChEBI" id="CHEBI:33019"/>
        <dbReference type="ChEBI" id="CHEBI:57464"/>
        <dbReference type="ChEBI" id="CHEBI:61314"/>
        <dbReference type="EC" id="3.6.1.66"/>
    </reaction>
</comment>
<comment type="catalytic activity">
    <reaction evidence="1">
        <text>dITP + H2O = dIMP + diphosphate + H(+)</text>
        <dbReference type="Rhea" id="RHEA:28342"/>
        <dbReference type="ChEBI" id="CHEBI:15377"/>
        <dbReference type="ChEBI" id="CHEBI:15378"/>
        <dbReference type="ChEBI" id="CHEBI:33019"/>
        <dbReference type="ChEBI" id="CHEBI:61194"/>
        <dbReference type="ChEBI" id="CHEBI:61382"/>
        <dbReference type="EC" id="3.6.1.66"/>
    </reaction>
</comment>
<comment type="catalytic activity">
    <reaction evidence="1">
        <text>ITP + H2O = IMP + diphosphate + H(+)</text>
        <dbReference type="Rhea" id="RHEA:29399"/>
        <dbReference type="ChEBI" id="CHEBI:15377"/>
        <dbReference type="ChEBI" id="CHEBI:15378"/>
        <dbReference type="ChEBI" id="CHEBI:33019"/>
        <dbReference type="ChEBI" id="CHEBI:58053"/>
        <dbReference type="ChEBI" id="CHEBI:61402"/>
        <dbReference type="EC" id="3.6.1.66"/>
    </reaction>
</comment>
<comment type="cofactor">
    <cofactor evidence="1">
        <name>Mg(2+)</name>
        <dbReference type="ChEBI" id="CHEBI:18420"/>
    </cofactor>
    <text evidence="1">Binds 1 Mg(2+) ion per subunit.</text>
</comment>
<comment type="subunit">
    <text evidence="1">Homodimer.</text>
</comment>
<comment type="similarity">
    <text evidence="1">Belongs to the HAM1 NTPase family.</text>
</comment>
<keyword id="KW-0378">Hydrolase</keyword>
<keyword id="KW-0460">Magnesium</keyword>
<keyword id="KW-0479">Metal-binding</keyword>
<keyword id="KW-0546">Nucleotide metabolism</keyword>
<keyword id="KW-0547">Nucleotide-binding</keyword>
<accession>Q8Z3U6</accession>
<proteinExistence type="inferred from homology"/>